<reference key="1">
    <citation type="journal article" date="2009" name="Autophagy">
        <title>epg-1 functions in autophagy-regulated processes and may encode a highly divergent Atg13 homolog in C. elegans.</title>
        <authorList>
            <person name="Tian E."/>
            <person name="Wang F."/>
            <person name="Han J."/>
            <person name="Zhang H."/>
        </authorList>
    </citation>
    <scope>NUCLEOTIDE SEQUENCE [MRNA]</scope>
    <scope>FUNCTION</scope>
    <scope>INTERACTION WITH UNC-51</scope>
    <scope>SUBCELLULAR LOCATION</scope>
    <scope>DEVELOPMENTAL STAGE</scope>
</reference>
<reference key="2">
    <citation type="journal article" date="1994" name="Nature">
        <title>2.2 Mb of contiguous nucleotide sequence from chromosome III of C. elegans.</title>
        <authorList>
            <person name="Wilson R."/>
            <person name="Ainscough R."/>
            <person name="Anderson K."/>
            <person name="Baynes C."/>
            <person name="Berks M."/>
            <person name="Bonfield J."/>
            <person name="Burton J."/>
            <person name="Connell M."/>
            <person name="Copsey T."/>
            <person name="Cooper J."/>
            <person name="Coulson A."/>
            <person name="Craxton M."/>
            <person name="Dear S."/>
            <person name="Du Z."/>
            <person name="Durbin R."/>
            <person name="Favello A."/>
            <person name="Fraser A."/>
            <person name="Fulton L."/>
            <person name="Gardner A."/>
            <person name="Green P."/>
            <person name="Hawkins T."/>
            <person name="Hillier L."/>
            <person name="Jier M."/>
            <person name="Johnston L."/>
            <person name="Jones M."/>
            <person name="Kershaw J."/>
            <person name="Kirsten J."/>
            <person name="Laisster N."/>
            <person name="Latreille P."/>
            <person name="Lightning J."/>
            <person name="Lloyd C."/>
            <person name="Mortimore B."/>
            <person name="O'Callaghan M."/>
            <person name="Parsons J."/>
            <person name="Percy C."/>
            <person name="Rifken L."/>
            <person name="Roopra A."/>
            <person name="Saunders D."/>
            <person name="Shownkeen R."/>
            <person name="Sims M."/>
            <person name="Smaldon N."/>
            <person name="Smith A."/>
            <person name="Smith M."/>
            <person name="Sonnhammer E."/>
            <person name="Staden R."/>
            <person name="Sulston J."/>
            <person name="Thierry-Mieg J."/>
            <person name="Thomas K."/>
            <person name="Vaudin M."/>
            <person name="Vaughan K."/>
            <person name="Waterston R."/>
            <person name="Watson A."/>
            <person name="Weinstock L."/>
            <person name="Wilkinson-Sproat J."/>
            <person name="Wohldman P."/>
        </authorList>
    </citation>
    <scope>NUCLEOTIDE SEQUENCE [LARGE SCALE GENOMIC DNA]</scope>
    <source>
        <strain>Bristol N2</strain>
    </source>
</reference>
<reference key="3">
    <citation type="journal article" date="1998" name="Science">
        <title>Genome sequence of the nematode C. elegans: a platform for investigating biology.</title>
        <authorList>
            <consortium name="The C. elegans sequencing consortium"/>
        </authorList>
    </citation>
    <scope>NUCLEOTIDE SEQUENCE [LARGE SCALE GENOMIC DNA]</scope>
    <source>
        <strain>Bristol N2</strain>
    </source>
</reference>
<reference key="4">
    <citation type="journal article" date="2015" name="Mol. Cell">
        <title>Structural Basis of the Differential Function of the Two C. elegans Atg8 Homologs, LGG-1 and LGG-2, in Autophagy.</title>
        <authorList>
            <person name="Wu F."/>
            <person name="Watanabe Y."/>
            <person name="Guo X.Y."/>
            <person name="Qi X."/>
            <person name="Wang P."/>
            <person name="Zhao H.Y."/>
            <person name="Wang Z."/>
            <person name="Fujioka Y."/>
            <person name="Zhang H."/>
            <person name="Ren J.Q."/>
            <person name="Fang T.C."/>
            <person name="Shen Y.X."/>
            <person name="Feng W."/>
            <person name="Hu J.J."/>
            <person name="Noda N.N."/>
            <person name="Zhang H."/>
        </authorList>
    </citation>
    <scope>FUNCTION</scope>
    <scope>SUBCELLULAR LOCATION</scope>
    <scope>INTERACTION WITH LGG-1</scope>
</reference>
<comment type="function">
    <text evidence="3 4">Component of the unc-51/atg-13 complex required for autophagosome formation (PubMed:19377305, PubMed:26687600). Required for the degradation of germ cell specific P-granule components such as sepa-1 by autophagy in somatic cells (PubMed:19377305). This ensures exclusive localization of the P-granules in germ cells (PubMed:19377305). May function downstream of the let-363 (Tor) signaling pathway to mediate sepa-1 degradation (PubMed:19377305). Plays a role in survival during limited food availability (PubMed:19377305).</text>
</comment>
<comment type="subunit">
    <text evidence="3 4">Interacts with unc-51 (via C-terminus) (PubMed:19377305). Interacts with lgg-1; the interaction is direct (PubMed:26687600).</text>
</comment>
<comment type="subcellular location">
    <subcellularLocation>
        <location evidence="1">Cytoplasm</location>
        <location evidence="1">Cytosol</location>
    </subcellularLocation>
    <subcellularLocation>
        <location evidence="3">Cytoplasm</location>
    </subcellularLocation>
    <subcellularLocation>
        <location evidence="4">Preautophagosomal structure</location>
    </subcellularLocation>
    <subcellularLocation>
        <location evidence="3">Perikaryon</location>
    </subcellularLocation>
    <subcellularLocation>
        <location evidence="3">Cell projection</location>
        <location evidence="3">Axon</location>
    </subcellularLocation>
    <text evidence="1 4">Under starvation conditions, is localized to punctate structures primarily representing the isolation membrane that sequesters a portion of the cytoplasm resulting in the formation of an autophagosome. Recruited to preautophagosomes by lgg-1 (PubMed:26687600).</text>
</comment>
<comment type="developmental stage">
    <text evidence="3">Expressed from the 8-cell stage and subsequently throughout embryogenesis. After hatching, highly expressed in neurons including nerve ring cells, neurons in the tail and DD/VD motor neurons in the ventral nerve cord. Also expressed in body wall muscle and pharyngeal muscle.</text>
</comment>
<comment type="similarity">
    <text evidence="6">Belongs to the ATG13 family. Metazoan subfamily.</text>
</comment>
<evidence type="ECO:0000250" key="1">
    <source>
        <dbReference type="UniProtKB" id="O75143"/>
    </source>
</evidence>
<evidence type="ECO:0000256" key="2">
    <source>
        <dbReference type="SAM" id="MobiDB-lite"/>
    </source>
</evidence>
<evidence type="ECO:0000269" key="3">
    <source>
    </source>
</evidence>
<evidence type="ECO:0000269" key="4">
    <source>
    </source>
</evidence>
<evidence type="ECO:0000303" key="5">
    <source>
    </source>
</evidence>
<evidence type="ECO:0000305" key="6"/>
<evidence type="ECO:0000312" key="7">
    <source>
        <dbReference type="WormBase" id="D2007.5"/>
    </source>
</evidence>
<keyword id="KW-0072">Autophagy</keyword>
<keyword id="KW-0966">Cell projection</keyword>
<keyword id="KW-0963">Cytoplasm</keyword>
<keyword id="KW-1185">Reference proteome</keyword>
<name>ATG13_CAEEL</name>
<protein>
    <recommendedName>
        <fullName>Autophagy-related protein 13 homolog</fullName>
    </recommendedName>
</protein>
<proteinExistence type="evidence at protein level"/>
<dbReference type="EMBL" id="FO080532">
    <property type="protein sequence ID" value="CCD64450.1"/>
    <property type="molecule type" value="Genomic_DNA"/>
</dbReference>
<dbReference type="PIR" id="S44786">
    <property type="entry name" value="S44786"/>
</dbReference>
<dbReference type="RefSeq" id="NP_498782.1">
    <property type="nucleotide sequence ID" value="NM_066381.6"/>
</dbReference>
<dbReference type="SMR" id="P34379"/>
<dbReference type="BioGRID" id="41356">
    <property type="interactions" value="5"/>
</dbReference>
<dbReference type="ComplexPortal" id="CPX-4821">
    <property type="entry name" value="unc-51-atg-13 complex"/>
</dbReference>
<dbReference type="FunCoup" id="P34379">
    <property type="interactions" value="102"/>
</dbReference>
<dbReference type="STRING" id="6239.D2007.5.1"/>
<dbReference type="PaxDb" id="6239-D2007.5.1"/>
<dbReference type="PeptideAtlas" id="P34379"/>
<dbReference type="EnsemblMetazoa" id="D2007.5.1">
    <property type="protein sequence ID" value="D2007.5.1"/>
    <property type="gene ID" value="WBGene00017045"/>
</dbReference>
<dbReference type="GeneID" id="176150"/>
<dbReference type="KEGG" id="cel:CELE_D2007.5"/>
<dbReference type="AGR" id="WB:WBGene00017045"/>
<dbReference type="CTD" id="176150"/>
<dbReference type="WormBase" id="D2007.5">
    <property type="protein sequence ID" value="CE00130"/>
    <property type="gene ID" value="WBGene00017045"/>
    <property type="gene designation" value="atg-13"/>
</dbReference>
<dbReference type="eggNOG" id="KOG3874">
    <property type="taxonomic scope" value="Eukaryota"/>
</dbReference>
<dbReference type="GeneTree" id="ENSGT00390000007055"/>
<dbReference type="HOGENOM" id="CLU_050282_0_0_1"/>
<dbReference type="InParanoid" id="P34379"/>
<dbReference type="OMA" id="MHFEEPE"/>
<dbReference type="OrthoDB" id="70161at2759"/>
<dbReference type="Reactome" id="R-CEL-1632852">
    <property type="pathway name" value="Macroautophagy"/>
</dbReference>
<dbReference type="PRO" id="PR:P34379"/>
<dbReference type="Proteomes" id="UP000001940">
    <property type="component" value="Chromosome III"/>
</dbReference>
<dbReference type="Bgee" id="WBGene00017045">
    <property type="expression patterns" value="Expressed in pharyngeal muscle cell (C elegans) and 4 other cell types or tissues"/>
</dbReference>
<dbReference type="GO" id="GO:1990316">
    <property type="term" value="C:Atg1/ULK1 kinase complex"/>
    <property type="evidence" value="ECO:0000318"/>
    <property type="project" value="GO_Central"/>
</dbReference>
<dbReference type="GO" id="GO:0005776">
    <property type="term" value="C:autophagosome"/>
    <property type="evidence" value="ECO:0000318"/>
    <property type="project" value="GO_Central"/>
</dbReference>
<dbReference type="GO" id="GO:0030424">
    <property type="term" value="C:axon"/>
    <property type="evidence" value="ECO:0007669"/>
    <property type="project" value="UniProtKB-SubCell"/>
</dbReference>
<dbReference type="GO" id="GO:0005737">
    <property type="term" value="C:cytoplasm"/>
    <property type="evidence" value="ECO:0000303"/>
    <property type="project" value="ComplexPortal"/>
</dbReference>
<dbReference type="GO" id="GO:0005829">
    <property type="term" value="C:cytosol"/>
    <property type="evidence" value="ECO:0000318"/>
    <property type="project" value="GO_Central"/>
</dbReference>
<dbReference type="GO" id="GO:0043204">
    <property type="term" value="C:perikaryon"/>
    <property type="evidence" value="ECO:0007669"/>
    <property type="project" value="UniProtKB-SubCell"/>
</dbReference>
<dbReference type="GO" id="GO:0000407">
    <property type="term" value="C:phagophore assembly site"/>
    <property type="evidence" value="ECO:0000318"/>
    <property type="project" value="GO_Central"/>
</dbReference>
<dbReference type="GO" id="GO:1902554">
    <property type="term" value="C:serine/threonine protein kinase complex"/>
    <property type="evidence" value="ECO:0000303"/>
    <property type="project" value="ComplexPortal"/>
</dbReference>
<dbReference type="GO" id="GO:0019887">
    <property type="term" value="F:protein kinase regulator activity"/>
    <property type="evidence" value="ECO:0000318"/>
    <property type="project" value="GO_Central"/>
</dbReference>
<dbReference type="GO" id="GO:0000045">
    <property type="term" value="P:autophagosome assembly"/>
    <property type="evidence" value="ECO:0000303"/>
    <property type="project" value="ComplexPortal"/>
</dbReference>
<dbReference type="GO" id="GO:0006914">
    <property type="term" value="P:autophagy"/>
    <property type="evidence" value="ECO:0000303"/>
    <property type="project" value="ComplexPortal"/>
</dbReference>
<dbReference type="GO" id="GO:0016236">
    <property type="term" value="P:macroautophagy"/>
    <property type="evidence" value="ECO:0000303"/>
    <property type="project" value="ComplexPortal"/>
</dbReference>
<dbReference type="GO" id="GO:0000423">
    <property type="term" value="P:mitophagy"/>
    <property type="evidence" value="ECO:0000318"/>
    <property type="project" value="GO_Central"/>
</dbReference>
<dbReference type="GO" id="GO:0034727">
    <property type="term" value="P:piecemeal microautophagy of the nucleus"/>
    <property type="evidence" value="ECO:0000318"/>
    <property type="project" value="GO_Central"/>
</dbReference>
<dbReference type="GO" id="GO:0034497">
    <property type="term" value="P:protein localization to phagophore assembly site"/>
    <property type="evidence" value="ECO:0000318"/>
    <property type="project" value="GO_Central"/>
</dbReference>
<dbReference type="FunFam" id="3.30.900.10:FF:000017">
    <property type="entry name" value="Autophagy-related protein 13"/>
    <property type="match status" value="1"/>
</dbReference>
<dbReference type="Gene3D" id="3.30.900.10">
    <property type="entry name" value="HORMA domain"/>
    <property type="match status" value="1"/>
</dbReference>
<dbReference type="InterPro" id="IPR040182">
    <property type="entry name" value="ATG13"/>
</dbReference>
<dbReference type="InterPro" id="IPR036570">
    <property type="entry name" value="HORMA_dom_sf"/>
</dbReference>
<dbReference type="PANTHER" id="PTHR13430">
    <property type="match status" value="1"/>
</dbReference>
<dbReference type="PANTHER" id="PTHR13430:SF4">
    <property type="entry name" value="AUTOPHAGY-RELATED PROTEIN 13"/>
    <property type="match status" value="1"/>
</dbReference>
<organism>
    <name type="scientific">Caenorhabditis elegans</name>
    <dbReference type="NCBI Taxonomy" id="6239"/>
    <lineage>
        <taxon>Eukaryota</taxon>
        <taxon>Metazoa</taxon>
        <taxon>Ecdysozoa</taxon>
        <taxon>Nematoda</taxon>
        <taxon>Chromadorea</taxon>
        <taxon>Rhabditida</taxon>
        <taxon>Rhabditina</taxon>
        <taxon>Rhabditomorpha</taxon>
        <taxon>Rhabditoidea</taxon>
        <taxon>Rhabditidae</taxon>
        <taxon>Peloderinae</taxon>
        <taxon>Caenorhabditis</taxon>
    </lineage>
</organism>
<sequence length="443" mass="49800">MVNEYDTYNKWLKFFSVRMVQSIIQSRLGDEIESKCVPYSENAVDWFNMRIDELGEISAYLKSNIKSYPPVGTLTLEFLLYTPSGQLLPLEAWILSSSEGTDDCSRNELYHDMSTLLRSAIVSARMTPMHRLYVKKQHLETFVIMYRVFENDISSDMGKGKKTRKIGELVSKFGNISLDLHYRTSMHFEEPEIAPVTPVEDVEEEIDDGEKTVVDENIQTRTVSECVPIADAKKRKASGSVESATSAGSSTSREAAPRFILGQSTSSEDSRHSDVQNSYEEDHKPSLADLRNHSFPFVNLLQSAYNPANGTKKNSSSTCLNSPKSTPEDKEPTIEKVAESFRAAKIDEVVFEEDEDEELPLDSMELSEDSFVHFNQLSDFGGAPSLGNELGDYLKQLKTAPDMTESGDIDICNMDLKTELEKISSQTANFNNFLKHVNSFSDE</sequence>
<accession>P34379</accession>
<feature type="chain" id="PRO_0000065267" description="Autophagy-related protein 13 homolog">
    <location>
        <begin position="1"/>
        <end position="443"/>
    </location>
</feature>
<feature type="region of interest" description="Disordered" evidence="2">
    <location>
        <begin position="232"/>
        <end position="283"/>
    </location>
</feature>
<feature type="region of interest" description="Disordered" evidence="2">
    <location>
        <begin position="308"/>
        <end position="333"/>
    </location>
</feature>
<feature type="compositionally biased region" description="Polar residues" evidence="2">
    <location>
        <begin position="240"/>
        <end position="253"/>
    </location>
</feature>
<feature type="compositionally biased region" description="Basic and acidic residues" evidence="2">
    <location>
        <begin position="268"/>
        <end position="283"/>
    </location>
</feature>
<feature type="compositionally biased region" description="Polar residues" evidence="2">
    <location>
        <begin position="308"/>
        <end position="325"/>
    </location>
</feature>
<gene>
    <name evidence="5 7" type="primary">atg-13</name>
    <name evidence="5 7" type="synonym">epg-1</name>
    <name evidence="7" type="ORF">D2007.5</name>
</gene>